<gene>
    <name type="ordered locus">AF_1301</name>
</gene>
<comment type="subcellular location">
    <subcellularLocation>
        <location evidence="2">Membrane</location>
        <topology evidence="2">Single-pass membrane protein</topology>
    </subcellularLocation>
</comment>
<feature type="chain" id="PRO_0000127984" description="Uncharacterized protein AF_1301">
    <location>
        <begin position="1"/>
        <end position="64"/>
    </location>
</feature>
<feature type="transmembrane region" description="Helical" evidence="1">
    <location>
        <begin position="30"/>
        <end position="52"/>
    </location>
</feature>
<dbReference type="EMBL" id="AE000782">
    <property type="protein sequence ID" value="AAB89953.1"/>
    <property type="molecule type" value="Genomic_DNA"/>
</dbReference>
<dbReference type="PIR" id="D69412">
    <property type="entry name" value="D69412"/>
</dbReference>
<dbReference type="RefSeq" id="WP_010878798.1">
    <property type="nucleotide sequence ID" value="NC_000917.1"/>
</dbReference>
<dbReference type="SMR" id="O28968"/>
<dbReference type="STRING" id="224325.AF_1301"/>
<dbReference type="PaxDb" id="224325-AF_1301"/>
<dbReference type="EnsemblBacteria" id="AAB89953">
    <property type="protein sequence ID" value="AAB89953"/>
    <property type="gene ID" value="AF_1301"/>
</dbReference>
<dbReference type="GeneID" id="43496669"/>
<dbReference type="KEGG" id="afu:AF_1301"/>
<dbReference type="HOGENOM" id="CLU_2856884_0_0_2"/>
<dbReference type="Proteomes" id="UP000002199">
    <property type="component" value="Chromosome"/>
</dbReference>
<dbReference type="GO" id="GO:0016020">
    <property type="term" value="C:membrane"/>
    <property type="evidence" value="ECO:0007669"/>
    <property type="project" value="UniProtKB-SubCell"/>
</dbReference>
<sequence length="64" mass="7396">MKTSLSSLQRGLSEIFAFAYRNYALTKNEFYAIFEMLFWPLVSLISVGLLGEFLYLDREAVASY</sequence>
<organism>
    <name type="scientific">Archaeoglobus fulgidus (strain ATCC 49558 / DSM 4304 / JCM 9628 / NBRC 100126 / VC-16)</name>
    <dbReference type="NCBI Taxonomy" id="224325"/>
    <lineage>
        <taxon>Archaea</taxon>
        <taxon>Methanobacteriati</taxon>
        <taxon>Methanobacteriota</taxon>
        <taxon>Archaeoglobi</taxon>
        <taxon>Archaeoglobales</taxon>
        <taxon>Archaeoglobaceae</taxon>
        <taxon>Archaeoglobus</taxon>
    </lineage>
</organism>
<reference key="1">
    <citation type="journal article" date="1997" name="Nature">
        <title>The complete genome sequence of the hyperthermophilic, sulphate-reducing archaeon Archaeoglobus fulgidus.</title>
        <authorList>
            <person name="Klenk H.-P."/>
            <person name="Clayton R.A."/>
            <person name="Tomb J.-F."/>
            <person name="White O."/>
            <person name="Nelson K.E."/>
            <person name="Ketchum K.A."/>
            <person name="Dodson R.J."/>
            <person name="Gwinn M.L."/>
            <person name="Hickey E.K."/>
            <person name="Peterson J.D."/>
            <person name="Richardson D.L."/>
            <person name="Kerlavage A.R."/>
            <person name="Graham D.E."/>
            <person name="Kyrpides N.C."/>
            <person name="Fleischmann R.D."/>
            <person name="Quackenbush J."/>
            <person name="Lee N.H."/>
            <person name="Sutton G.G."/>
            <person name="Gill S.R."/>
            <person name="Kirkness E.F."/>
            <person name="Dougherty B.A."/>
            <person name="McKenney K."/>
            <person name="Adams M.D."/>
            <person name="Loftus B.J."/>
            <person name="Peterson S.N."/>
            <person name="Reich C.I."/>
            <person name="McNeil L.K."/>
            <person name="Badger J.H."/>
            <person name="Glodek A."/>
            <person name="Zhou L."/>
            <person name="Overbeek R."/>
            <person name="Gocayne J.D."/>
            <person name="Weidman J.F."/>
            <person name="McDonald L.A."/>
            <person name="Utterback T.R."/>
            <person name="Cotton M.D."/>
            <person name="Spriggs T."/>
            <person name="Artiach P."/>
            <person name="Kaine B.P."/>
            <person name="Sykes S.M."/>
            <person name="Sadow P.W."/>
            <person name="D'Andrea K.P."/>
            <person name="Bowman C."/>
            <person name="Fujii C."/>
            <person name="Garland S.A."/>
            <person name="Mason T.M."/>
            <person name="Olsen G.J."/>
            <person name="Fraser C.M."/>
            <person name="Smith H.O."/>
            <person name="Woese C.R."/>
            <person name="Venter J.C."/>
        </authorList>
    </citation>
    <scope>NUCLEOTIDE SEQUENCE [LARGE SCALE GENOMIC DNA]</scope>
    <source>
        <strain>ATCC 49558 / DSM 4304 / JCM 9628 / NBRC 100126 / VC-16</strain>
    </source>
</reference>
<keyword id="KW-0472">Membrane</keyword>
<keyword id="KW-1185">Reference proteome</keyword>
<keyword id="KW-0812">Transmembrane</keyword>
<keyword id="KW-1133">Transmembrane helix</keyword>
<evidence type="ECO:0000255" key="1"/>
<evidence type="ECO:0000305" key="2"/>
<accession>O28968</accession>
<proteinExistence type="predicted"/>
<name>Y1301_ARCFU</name>
<protein>
    <recommendedName>
        <fullName>Uncharacterized protein AF_1301</fullName>
    </recommendedName>
</protein>